<dbReference type="EC" id="2.7.7.6" evidence="1"/>
<dbReference type="EMBL" id="BA000023">
    <property type="protein sequence ID" value="BAK54217.1"/>
    <property type="molecule type" value="Genomic_DNA"/>
</dbReference>
<dbReference type="RefSeq" id="WP_052846867.1">
    <property type="nucleotide sequence ID" value="NC_003106.2"/>
</dbReference>
<dbReference type="SMR" id="Q976A6"/>
<dbReference type="STRING" id="273063.STK_02750"/>
<dbReference type="GeneID" id="1458176"/>
<dbReference type="KEGG" id="sto:STK_02750"/>
<dbReference type="PATRIC" id="fig|273063.9.peg.326"/>
<dbReference type="eggNOG" id="arCOG04256">
    <property type="taxonomic scope" value="Archaea"/>
</dbReference>
<dbReference type="OrthoDB" id="372142at2157"/>
<dbReference type="Proteomes" id="UP000001015">
    <property type="component" value="Chromosome"/>
</dbReference>
<dbReference type="GO" id="GO:0005737">
    <property type="term" value="C:cytoplasm"/>
    <property type="evidence" value="ECO:0007669"/>
    <property type="project" value="UniProtKB-SubCell"/>
</dbReference>
<dbReference type="GO" id="GO:0000428">
    <property type="term" value="C:DNA-directed RNA polymerase complex"/>
    <property type="evidence" value="ECO:0007669"/>
    <property type="project" value="UniProtKB-KW"/>
</dbReference>
<dbReference type="GO" id="GO:0003677">
    <property type="term" value="F:DNA binding"/>
    <property type="evidence" value="ECO:0007669"/>
    <property type="project" value="UniProtKB-UniRule"/>
</dbReference>
<dbReference type="GO" id="GO:0003899">
    <property type="term" value="F:DNA-directed RNA polymerase activity"/>
    <property type="evidence" value="ECO:0007669"/>
    <property type="project" value="UniProtKB-UniRule"/>
</dbReference>
<dbReference type="GO" id="GO:0006351">
    <property type="term" value="P:DNA-templated transcription"/>
    <property type="evidence" value="ECO:0007669"/>
    <property type="project" value="UniProtKB-UniRule"/>
</dbReference>
<dbReference type="CDD" id="cd06528">
    <property type="entry name" value="RNAP_A"/>
    <property type="match status" value="1"/>
</dbReference>
<dbReference type="Gene3D" id="1.10.150.390">
    <property type="match status" value="1"/>
</dbReference>
<dbReference type="HAMAP" id="MF_00411">
    <property type="entry name" value="RNApol_arch_Rpo1C"/>
    <property type="match status" value="1"/>
</dbReference>
<dbReference type="InterPro" id="IPR045867">
    <property type="entry name" value="DNA-dir_RpoC_beta_prime"/>
</dbReference>
<dbReference type="InterPro" id="IPR007081">
    <property type="entry name" value="RNA_pol_Rpb1_5"/>
</dbReference>
<dbReference type="InterPro" id="IPR012757">
    <property type="entry name" value="RPO1C"/>
</dbReference>
<dbReference type="NCBIfam" id="TIGR02389">
    <property type="entry name" value="RNA_pol_rpoA2"/>
    <property type="match status" value="1"/>
</dbReference>
<dbReference type="PANTHER" id="PTHR19376">
    <property type="entry name" value="DNA-DIRECTED RNA POLYMERASE"/>
    <property type="match status" value="1"/>
</dbReference>
<dbReference type="PANTHER" id="PTHR19376:SF32">
    <property type="entry name" value="DNA-DIRECTED RNA POLYMERASE III SUBUNIT RPC1"/>
    <property type="match status" value="1"/>
</dbReference>
<dbReference type="Pfam" id="PF04998">
    <property type="entry name" value="RNA_pol_Rpb1_5"/>
    <property type="match status" value="1"/>
</dbReference>
<dbReference type="SUPFAM" id="SSF64484">
    <property type="entry name" value="beta and beta-prime subunits of DNA dependent RNA-polymerase"/>
    <property type="match status" value="1"/>
</dbReference>
<name>RPO1C_SULTO</name>
<keyword id="KW-0963">Cytoplasm</keyword>
<keyword id="KW-0238">DNA-binding</keyword>
<keyword id="KW-0240">DNA-directed RNA polymerase</keyword>
<keyword id="KW-0548">Nucleotidyltransferase</keyword>
<keyword id="KW-1185">Reference proteome</keyword>
<keyword id="KW-0804">Transcription</keyword>
<keyword id="KW-0808">Transferase</keyword>
<protein>
    <recommendedName>
        <fullName evidence="1">DNA-directed RNA polymerase subunit Rpo1C</fullName>
        <ecNumber evidence="1">2.7.7.6</ecNumber>
    </recommendedName>
    <alternativeName>
        <fullName evidence="1">DNA-directed RNA polymerase subunit A''</fullName>
    </alternativeName>
</protein>
<evidence type="ECO:0000255" key="1">
    <source>
        <dbReference type="HAMAP-Rule" id="MF_00411"/>
    </source>
</evidence>
<feature type="chain" id="PRO_0000074027" description="DNA-directed RNA polymerase subunit Rpo1C">
    <location>
        <begin position="1"/>
        <end position="392"/>
    </location>
</feature>
<gene>
    <name evidence="1" type="primary">rpo1C</name>
    <name evidence="1" type="synonym">rpoA2</name>
    <name type="ordered locus">STK_02750</name>
</gene>
<accession>Q976A6</accession>
<accession>F9VMS1</accession>
<organism>
    <name type="scientific">Sulfurisphaera tokodaii (strain DSM 16993 / JCM 10545 / NBRC 100140 / 7)</name>
    <name type="common">Sulfolobus tokodaii</name>
    <dbReference type="NCBI Taxonomy" id="273063"/>
    <lineage>
        <taxon>Archaea</taxon>
        <taxon>Thermoproteota</taxon>
        <taxon>Thermoprotei</taxon>
        <taxon>Sulfolobales</taxon>
        <taxon>Sulfolobaceae</taxon>
        <taxon>Sulfurisphaera</taxon>
    </lineage>
</organism>
<proteinExistence type="inferred from homology"/>
<sequence length="392" mass="43994">MVSDYIKSYIERSLEQIRDKLPDKVIQDLREALLNTDINLTESDVDKIIDLAVKDYQESLIEPGEAVGIVSAQSIGEPGTQMTLRTFHFAGIRELNVTLGLPRLIEIVDARKTPSTPIMTIYLTDEYKYDKEKALEIARKIEYTKIENVISSISVDITNMSITIQLDEEMLKDKGVDPSSVKKIISKLKLGKIRIEDIDDYTFTIYFEEIDNISALFKMREKLLNTKIKGIKGIRRAIVQKKGDEYVIITDGSNLEGVIGIKGVDVNKIQTNNIHEIADTFGIEAAREAIAREIKKVLEEQGLDVDMRHILLVADIMTRTGVVRQIGRHGVTGEKSSVLARAAFEVTVKHLLDAAARGEMEEFKGVVENIIIGQPIRLGTGIVELTMRLNVR</sequence>
<comment type="function">
    <text evidence="1">DNA-dependent RNA polymerase (RNAP) catalyzes the transcription of DNA into RNA using the four ribonucleoside triphosphates as substrates. Forms part of the jaw domain.</text>
</comment>
<comment type="catalytic activity">
    <reaction evidence="1">
        <text>RNA(n) + a ribonucleoside 5'-triphosphate = RNA(n+1) + diphosphate</text>
        <dbReference type="Rhea" id="RHEA:21248"/>
        <dbReference type="Rhea" id="RHEA-COMP:14527"/>
        <dbReference type="Rhea" id="RHEA-COMP:17342"/>
        <dbReference type="ChEBI" id="CHEBI:33019"/>
        <dbReference type="ChEBI" id="CHEBI:61557"/>
        <dbReference type="ChEBI" id="CHEBI:140395"/>
        <dbReference type="EC" id="2.7.7.6"/>
    </reaction>
</comment>
<comment type="subunit">
    <text evidence="1">Part of the RNA polymerase complex.</text>
</comment>
<comment type="subcellular location">
    <subcellularLocation>
        <location evidence="1">Cytoplasm</location>
    </subcellularLocation>
</comment>
<comment type="similarity">
    <text evidence="1">Belongs to the RNA polymerase beta' chain family.</text>
</comment>
<reference key="1">
    <citation type="journal article" date="2001" name="DNA Res.">
        <title>Complete genome sequence of an aerobic thermoacidophilic Crenarchaeon, Sulfolobus tokodaii strain7.</title>
        <authorList>
            <person name="Kawarabayasi Y."/>
            <person name="Hino Y."/>
            <person name="Horikawa H."/>
            <person name="Jin-no K."/>
            <person name="Takahashi M."/>
            <person name="Sekine M."/>
            <person name="Baba S."/>
            <person name="Ankai A."/>
            <person name="Kosugi H."/>
            <person name="Hosoyama A."/>
            <person name="Fukui S."/>
            <person name="Nagai Y."/>
            <person name="Nishijima K."/>
            <person name="Otsuka R."/>
            <person name="Nakazawa H."/>
            <person name="Takamiya M."/>
            <person name="Kato Y."/>
            <person name="Yoshizawa T."/>
            <person name="Tanaka T."/>
            <person name="Kudoh Y."/>
            <person name="Yamazaki J."/>
            <person name="Kushida N."/>
            <person name="Oguchi A."/>
            <person name="Aoki K."/>
            <person name="Masuda S."/>
            <person name="Yanagii M."/>
            <person name="Nishimura M."/>
            <person name="Yamagishi A."/>
            <person name="Oshima T."/>
            <person name="Kikuchi H."/>
        </authorList>
    </citation>
    <scope>NUCLEOTIDE SEQUENCE [LARGE SCALE GENOMIC DNA]</scope>
    <source>
        <strain>DSM 16993 / JCM 10545 / NBRC 100140 / 7</strain>
    </source>
</reference>